<organism>
    <name type="scientific">Eremothecium gossypii (strain ATCC 10895 / CBS 109.51 / FGSC 9923 / NRRL Y-1056)</name>
    <name type="common">Yeast</name>
    <name type="synonym">Ashbya gossypii</name>
    <dbReference type="NCBI Taxonomy" id="284811"/>
    <lineage>
        <taxon>Eukaryota</taxon>
        <taxon>Fungi</taxon>
        <taxon>Dikarya</taxon>
        <taxon>Ascomycota</taxon>
        <taxon>Saccharomycotina</taxon>
        <taxon>Saccharomycetes</taxon>
        <taxon>Saccharomycetales</taxon>
        <taxon>Saccharomycetaceae</taxon>
        <taxon>Eremothecium</taxon>
    </lineage>
</organism>
<dbReference type="EC" id="2.1.1.-" evidence="1"/>
<dbReference type="EMBL" id="AE016817">
    <property type="protein sequence ID" value="AAS52082.1"/>
    <property type="molecule type" value="Genomic_DNA"/>
</dbReference>
<dbReference type="RefSeq" id="NP_984258.1">
    <property type="nucleotide sequence ID" value="NM_209611.1"/>
</dbReference>
<dbReference type="SMR" id="Q759W1"/>
<dbReference type="FunCoup" id="Q759W1">
    <property type="interactions" value="414"/>
</dbReference>
<dbReference type="STRING" id="284811.Q759W1"/>
<dbReference type="EnsemblFungi" id="AAS52082">
    <property type="protein sequence ID" value="AAS52082"/>
    <property type="gene ID" value="AGOS_ADR161W"/>
</dbReference>
<dbReference type="GeneID" id="4620420"/>
<dbReference type="KEGG" id="ago:AGOS_ADR161W"/>
<dbReference type="eggNOG" id="KOG1709">
    <property type="taxonomic scope" value="Eukaryota"/>
</dbReference>
<dbReference type="HOGENOM" id="CLU_033831_0_0_1"/>
<dbReference type="InParanoid" id="Q759W1"/>
<dbReference type="OMA" id="NYYYHPR"/>
<dbReference type="OrthoDB" id="19014at2759"/>
<dbReference type="Proteomes" id="UP000000591">
    <property type="component" value="Chromosome IV"/>
</dbReference>
<dbReference type="GO" id="GO:0005737">
    <property type="term" value="C:cytoplasm"/>
    <property type="evidence" value="ECO:0000318"/>
    <property type="project" value="GO_Central"/>
</dbReference>
<dbReference type="GO" id="GO:0005634">
    <property type="term" value="C:nucleus"/>
    <property type="evidence" value="ECO:0000318"/>
    <property type="project" value="GO_Central"/>
</dbReference>
<dbReference type="GO" id="GO:0019702">
    <property type="term" value="F:protein arginine N5-methyltransferase activity"/>
    <property type="evidence" value="ECO:0000318"/>
    <property type="project" value="GO_Central"/>
</dbReference>
<dbReference type="GO" id="GO:0032259">
    <property type="term" value="P:methylation"/>
    <property type="evidence" value="ECO:0007669"/>
    <property type="project" value="UniProtKB-KW"/>
</dbReference>
<dbReference type="FunFam" id="3.40.50.150:FF:000310">
    <property type="entry name" value="Arginine N-methyltransferase 2"/>
    <property type="match status" value="1"/>
</dbReference>
<dbReference type="Gene3D" id="3.40.50.150">
    <property type="entry name" value="Vaccinia Virus protein VP39"/>
    <property type="match status" value="1"/>
</dbReference>
<dbReference type="InterPro" id="IPR017408">
    <property type="entry name" value="Arginine_N-MeTrfase_2"/>
</dbReference>
<dbReference type="InterPro" id="IPR051038">
    <property type="entry name" value="RMT2/GAMT_Mtase"/>
</dbReference>
<dbReference type="InterPro" id="IPR026480">
    <property type="entry name" value="RMT2_dom"/>
</dbReference>
<dbReference type="InterPro" id="IPR029063">
    <property type="entry name" value="SAM-dependent_MTases_sf"/>
</dbReference>
<dbReference type="PANTHER" id="PTHR32379">
    <property type="entry name" value="GUANIDINOACETATE N-METHYLTRANSFERASE"/>
    <property type="match status" value="1"/>
</dbReference>
<dbReference type="PANTHER" id="PTHR32379:SF1">
    <property type="entry name" value="GUANIDINOACETATE N-METHYLTRANSFERASE"/>
    <property type="match status" value="1"/>
</dbReference>
<dbReference type="PIRSF" id="PIRSF038148">
    <property type="entry name" value="Arginine_N-mtfrase-2"/>
    <property type="match status" value="1"/>
</dbReference>
<dbReference type="SUPFAM" id="SSF53335">
    <property type="entry name" value="S-adenosyl-L-methionine-dependent methyltransferases"/>
    <property type="match status" value="1"/>
</dbReference>
<dbReference type="PROSITE" id="PS51559">
    <property type="entry name" value="SAM_RMT2"/>
    <property type="match status" value="1"/>
</dbReference>
<feature type="chain" id="PRO_0000228969" description="Protein arginine N-methyltransferase 2">
    <location>
        <begin position="1"/>
        <end position="413"/>
    </location>
</feature>
<feature type="domain" description="RMT2" evidence="2">
    <location>
        <begin position="192"/>
        <end position="413"/>
    </location>
</feature>
<feature type="region of interest" description="Disordered" evidence="3">
    <location>
        <begin position="148"/>
        <end position="187"/>
    </location>
</feature>
<feature type="compositionally biased region" description="Low complexity" evidence="3">
    <location>
        <begin position="162"/>
        <end position="182"/>
    </location>
</feature>
<feature type="binding site" evidence="2">
    <location>
        <position position="199"/>
    </location>
    <ligand>
        <name>S-adenosyl-L-methionine</name>
        <dbReference type="ChEBI" id="CHEBI:59789"/>
    </ligand>
</feature>
<feature type="binding site" evidence="2">
    <location>
        <position position="229"/>
    </location>
    <ligand>
        <name>S-adenosyl-L-methionine</name>
        <dbReference type="ChEBI" id="CHEBI:59789"/>
    </ligand>
</feature>
<feature type="binding site" evidence="2">
    <location>
        <begin position="252"/>
        <end position="257"/>
    </location>
    <ligand>
        <name>S-adenosyl-L-methionine</name>
        <dbReference type="ChEBI" id="CHEBI:59789"/>
    </ligand>
</feature>
<feature type="binding site" evidence="2">
    <location>
        <begin position="273"/>
        <end position="275"/>
    </location>
    <ligand>
        <name>S-adenosyl-L-methionine</name>
        <dbReference type="ChEBI" id="CHEBI:59789"/>
    </ligand>
</feature>
<feature type="binding site" evidence="2">
    <location>
        <begin position="300"/>
        <end position="301"/>
    </location>
    <ligand>
        <name>S-adenosyl-L-methionine</name>
        <dbReference type="ChEBI" id="CHEBI:59789"/>
    </ligand>
</feature>
<feature type="binding site" evidence="2">
    <location>
        <position position="321"/>
    </location>
    <ligand>
        <name>S-adenosyl-L-methionine</name>
        <dbReference type="ChEBI" id="CHEBI:59789"/>
    </ligand>
</feature>
<proteinExistence type="inferred from homology"/>
<name>RMT2_EREGS</name>
<gene>
    <name evidence="1" type="primary">RMT2</name>
    <name type="ordered locus">ADR161W</name>
</gene>
<keyword id="KW-0963">Cytoplasm</keyword>
<keyword id="KW-0489">Methyltransferase</keyword>
<keyword id="KW-0539">Nucleus</keyword>
<keyword id="KW-1185">Reference proteome</keyword>
<keyword id="KW-0949">S-adenosyl-L-methionine</keyword>
<keyword id="KW-0808">Transferase</keyword>
<comment type="function">
    <text evidence="1">S-adenosyl-L-methionine-dependent protein-arginine N-methyltransferase that methylates the delta-nitrogen atom of arginine residues to form N5-methylarginine (type IV) in target proteins. Monomethylates ribosomal protein L12.</text>
</comment>
<comment type="subunit">
    <text evidence="1">Monomer.</text>
</comment>
<comment type="subcellular location">
    <subcellularLocation>
        <location evidence="1">Cytoplasm</location>
    </subcellularLocation>
    <subcellularLocation>
        <location evidence="1">Nucleus</location>
    </subcellularLocation>
</comment>
<comment type="similarity">
    <text evidence="2">Belongs to the class I-like SAM-binding methyltransferase superfamily. RMT2 methyltransferase family.</text>
</comment>
<accession>Q759W1</accession>
<sequence length="413" mass="46357">MSLLHHLVTLPSRPITRDAYLPQLQNLLRSGIPATYTLEQLAAYEKGDEEGPGDEDTNTTPLHIMARSLPEAGQLSEAESEVVLEIMDTLFQYGAGWNFLDYEQKHAGDLLLEKGYGPGDALYERLVEAGVAAELLLRKVNGGEIEFLDGSDTEMGDKGGSARDVPASADSAPADSAGHSSSEPTAVDADATAAHQDTYLQTELEYIPGALVTKHNRDGVMMDWETDIMRVAAASIVKNREPAECQVLNIGFGMGIIDGFLQEQRPTRHYICEAHPDVLARMRREGWYERPDVVILEGRWQDTLSRLLDDGTVFFDGIYYDTFSEHYTDMLELYDLVVGLIKPCGIFSFFNGLGADRQVCYDVYRRIVELDMATYGMTCEYTTIDLRQLPTWDNVRRSYFNCDHYYHPEISFQ</sequence>
<reference key="1">
    <citation type="journal article" date="2004" name="Science">
        <title>The Ashbya gossypii genome as a tool for mapping the ancient Saccharomyces cerevisiae genome.</title>
        <authorList>
            <person name="Dietrich F.S."/>
            <person name="Voegeli S."/>
            <person name="Brachat S."/>
            <person name="Lerch A."/>
            <person name="Gates K."/>
            <person name="Steiner S."/>
            <person name="Mohr C."/>
            <person name="Poehlmann R."/>
            <person name="Luedi P."/>
            <person name="Choi S."/>
            <person name="Wing R.A."/>
            <person name="Flavier A."/>
            <person name="Gaffney T.D."/>
            <person name="Philippsen P."/>
        </authorList>
    </citation>
    <scope>NUCLEOTIDE SEQUENCE [LARGE SCALE GENOMIC DNA]</scope>
    <source>
        <strain>ATCC 10895 / CBS 109.51 / FGSC 9923 / NRRL Y-1056</strain>
    </source>
</reference>
<reference key="2">
    <citation type="journal article" date="2013" name="G3 (Bethesda)">
        <title>Genomes of Ashbya fungi isolated from insects reveal four mating-type loci, numerous translocations, lack of transposons, and distinct gene duplications.</title>
        <authorList>
            <person name="Dietrich F.S."/>
            <person name="Voegeli S."/>
            <person name="Kuo S."/>
            <person name="Philippsen P."/>
        </authorList>
    </citation>
    <scope>GENOME REANNOTATION</scope>
    <source>
        <strain>ATCC 10895 / CBS 109.51 / FGSC 9923 / NRRL Y-1056</strain>
    </source>
</reference>
<evidence type="ECO:0000250" key="1">
    <source>
        <dbReference type="UniProtKB" id="Q03305"/>
    </source>
</evidence>
<evidence type="ECO:0000255" key="2">
    <source>
        <dbReference type="PROSITE-ProRule" id="PRU00892"/>
    </source>
</evidence>
<evidence type="ECO:0000256" key="3">
    <source>
        <dbReference type="SAM" id="MobiDB-lite"/>
    </source>
</evidence>
<protein>
    <recommendedName>
        <fullName evidence="1">Protein arginine N-methyltransferase 2</fullName>
        <ecNumber evidence="1">2.1.1.-</ecNumber>
    </recommendedName>
    <alternativeName>
        <fullName evidence="1">Protein-arginine N5-methyltransferase</fullName>
    </alternativeName>
    <alternativeName>
        <fullName evidence="1">Type IV protein arginine N-methyltransferase</fullName>
        <shortName evidence="1">Type IV PRMT</shortName>
    </alternativeName>
</protein>